<feature type="signal peptide" evidence="1">
    <location>
        <begin position="1"/>
        <end position="21"/>
    </location>
</feature>
<feature type="chain" id="PRO_0000371366" description="Frizzled and smoothened-like protein D">
    <location>
        <begin position="22"/>
        <end position="634"/>
    </location>
</feature>
<feature type="topological domain" description="Extracellular" evidence="1">
    <location>
        <begin position="22"/>
        <end position="257"/>
    </location>
</feature>
<feature type="transmembrane region" description="Helical; Name=1" evidence="1">
    <location>
        <begin position="258"/>
        <end position="278"/>
    </location>
</feature>
<feature type="topological domain" description="Cytoplasmic" evidence="1">
    <location>
        <begin position="279"/>
        <end position="287"/>
    </location>
</feature>
<feature type="transmembrane region" description="Helical; Name=2" evidence="1">
    <location>
        <begin position="288"/>
        <end position="308"/>
    </location>
</feature>
<feature type="topological domain" description="Extracellular" evidence="1">
    <location>
        <begin position="309"/>
        <end position="335"/>
    </location>
</feature>
<feature type="transmembrane region" description="Helical; Name=3" evidence="1">
    <location>
        <begin position="336"/>
        <end position="356"/>
    </location>
</feature>
<feature type="topological domain" description="Cytoplasmic" evidence="1">
    <location>
        <begin position="357"/>
        <end position="368"/>
    </location>
</feature>
<feature type="transmembrane region" description="Helical; Name=4" evidence="1">
    <location>
        <begin position="369"/>
        <end position="389"/>
    </location>
</feature>
<feature type="topological domain" description="Extracellular" evidence="1">
    <location>
        <begin position="390"/>
        <end position="410"/>
    </location>
</feature>
<feature type="transmembrane region" description="Helical; Name=5" evidence="1">
    <location>
        <begin position="411"/>
        <end position="431"/>
    </location>
</feature>
<feature type="topological domain" description="Cytoplasmic" evidence="1">
    <location>
        <begin position="432"/>
        <end position="454"/>
    </location>
</feature>
<feature type="transmembrane region" description="Helical; Name=6" evidence="1">
    <location>
        <begin position="455"/>
        <end position="475"/>
    </location>
</feature>
<feature type="topological domain" description="Extracellular" evidence="1">
    <location>
        <begin position="476"/>
        <end position="513"/>
    </location>
</feature>
<feature type="transmembrane region" description="Helical; Name=7" evidence="1">
    <location>
        <begin position="514"/>
        <end position="534"/>
    </location>
</feature>
<feature type="topological domain" description="Cytoplasmic" evidence="1">
    <location>
        <begin position="535"/>
        <end position="634"/>
    </location>
</feature>
<feature type="domain" description="FZ">
    <location>
        <begin position="34"/>
        <end position="178"/>
    </location>
</feature>
<feature type="region of interest" description="Disordered" evidence="2">
    <location>
        <begin position="560"/>
        <end position="624"/>
    </location>
</feature>
<feature type="compositionally biased region" description="Low complexity" evidence="2">
    <location>
        <begin position="572"/>
        <end position="592"/>
    </location>
</feature>
<feature type="compositionally biased region" description="Low complexity" evidence="2">
    <location>
        <begin position="609"/>
        <end position="622"/>
    </location>
</feature>
<feature type="glycosylation site" description="N-linked (GlcNAc...) asparagine" evidence="1">
    <location>
        <position position="126"/>
    </location>
</feature>
<feature type="glycosylation site" description="N-linked (GlcNAc...) asparagine" evidence="1">
    <location>
        <position position="168"/>
    </location>
</feature>
<feature type="glycosylation site" description="N-linked (GlcNAc...) asparagine" evidence="1">
    <location>
        <position position="215"/>
    </location>
</feature>
<feature type="glycosylation site" description="N-linked (GlcNAc...) asparagine" evidence="1">
    <location>
        <position position="243"/>
    </location>
</feature>
<feature type="glycosylation site" description="N-linked (GlcNAc...) asparagine" evidence="1">
    <location>
        <position position="254"/>
    </location>
</feature>
<gene>
    <name type="primary">fslD</name>
    <name type="ORF">DDB_G0269528</name>
</gene>
<protein>
    <recommendedName>
        <fullName>Frizzled and smoothened-like protein D</fullName>
    </recommendedName>
</protein>
<reference key="1">
    <citation type="journal article" date="2005" name="Nature">
        <title>The genome of the social amoeba Dictyostelium discoideum.</title>
        <authorList>
            <person name="Eichinger L."/>
            <person name="Pachebat J.A."/>
            <person name="Gloeckner G."/>
            <person name="Rajandream M.A."/>
            <person name="Sucgang R."/>
            <person name="Berriman M."/>
            <person name="Song J."/>
            <person name="Olsen R."/>
            <person name="Szafranski K."/>
            <person name="Xu Q."/>
            <person name="Tunggal B."/>
            <person name="Kummerfeld S."/>
            <person name="Madera M."/>
            <person name="Konfortov B.A."/>
            <person name="Rivero F."/>
            <person name="Bankier A.T."/>
            <person name="Lehmann R."/>
            <person name="Hamlin N."/>
            <person name="Davies R."/>
            <person name="Gaudet P."/>
            <person name="Fey P."/>
            <person name="Pilcher K."/>
            <person name="Chen G."/>
            <person name="Saunders D."/>
            <person name="Sodergren E.J."/>
            <person name="Davis P."/>
            <person name="Kerhornou A."/>
            <person name="Nie X."/>
            <person name="Hall N."/>
            <person name="Anjard C."/>
            <person name="Hemphill L."/>
            <person name="Bason N."/>
            <person name="Farbrother P."/>
            <person name="Desany B."/>
            <person name="Just E."/>
            <person name="Morio T."/>
            <person name="Rost R."/>
            <person name="Churcher C.M."/>
            <person name="Cooper J."/>
            <person name="Haydock S."/>
            <person name="van Driessche N."/>
            <person name="Cronin A."/>
            <person name="Goodhead I."/>
            <person name="Muzny D.M."/>
            <person name="Mourier T."/>
            <person name="Pain A."/>
            <person name="Lu M."/>
            <person name="Harper D."/>
            <person name="Lindsay R."/>
            <person name="Hauser H."/>
            <person name="James K.D."/>
            <person name="Quiles M."/>
            <person name="Madan Babu M."/>
            <person name="Saito T."/>
            <person name="Buchrieser C."/>
            <person name="Wardroper A."/>
            <person name="Felder M."/>
            <person name="Thangavelu M."/>
            <person name="Johnson D."/>
            <person name="Knights A."/>
            <person name="Loulseged H."/>
            <person name="Mungall K.L."/>
            <person name="Oliver K."/>
            <person name="Price C."/>
            <person name="Quail M.A."/>
            <person name="Urushihara H."/>
            <person name="Hernandez J."/>
            <person name="Rabbinowitsch E."/>
            <person name="Steffen D."/>
            <person name="Sanders M."/>
            <person name="Ma J."/>
            <person name="Kohara Y."/>
            <person name="Sharp S."/>
            <person name="Simmonds M.N."/>
            <person name="Spiegler S."/>
            <person name="Tivey A."/>
            <person name="Sugano S."/>
            <person name="White B."/>
            <person name="Walker D."/>
            <person name="Woodward J.R."/>
            <person name="Winckler T."/>
            <person name="Tanaka Y."/>
            <person name="Shaulsky G."/>
            <person name="Schleicher M."/>
            <person name="Weinstock G.M."/>
            <person name="Rosenthal A."/>
            <person name="Cox E.C."/>
            <person name="Chisholm R.L."/>
            <person name="Gibbs R.A."/>
            <person name="Loomis W.F."/>
            <person name="Platzer M."/>
            <person name="Kay R.R."/>
            <person name="Williams J.G."/>
            <person name="Dear P.H."/>
            <person name="Noegel A.A."/>
            <person name="Barrell B.G."/>
            <person name="Kuspa A."/>
        </authorList>
    </citation>
    <scope>NUCLEOTIDE SEQUENCE [LARGE SCALE GENOMIC DNA]</scope>
    <source>
        <strain>AX4</strain>
    </source>
</reference>
<reference key="2">
    <citation type="journal article" date="2006" name="Eur. J. Cell Biol.">
        <title>The Dictyostelium repertoire of seven transmembrane domain receptors.</title>
        <authorList>
            <person name="Prabhu Y."/>
            <person name="Eichinger L."/>
        </authorList>
    </citation>
    <scope>NOMENCLATURE</scope>
</reference>
<keyword id="KW-0175">Coiled coil</keyword>
<keyword id="KW-0325">Glycoprotein</keyword>
<keyword id="KW-0472">Membrane</keyword>
<keyword id="KW-0675">Receptor</keyword>
<keyword id="KW-1185">Reference proteome</keyword>
<keyword id="KW-0732">Signal</keyword>
<keyword id="KW-0812">Transmembrane</keyword>
<keyword id="KW-1133">Transmembrane helix</keyword>
<accession>Q55DT7</accession>
<sequence>MINKFKFYLIFLKLILILVNCQNSLNDYGFGIVDESSICTSYIGDELCKNRLSNSESIYTTPGGGGGGGIDKLSQISTLPILQKGFQSLTFSQGICKDLNFIEFGMCDSALSPCIETTPKITPGYNISLPQRVCKSVCERMLIGCPQLAIQIDCSISFLFPKIGTFYNLTKYGYTANGGMYMVPCIDTEINYEKNKVQENVGFLESCPYPLLLKNSTDPQYAEKRGYTYLTPTNCVLPCPIPNYTKRQMDSVINMSKAMSSISFVLSLFNVITFGLLIKKKSKYNVCIALMAIGSSFIYLSDIINYGVGIEKQLCPEPGRVATQRVDSLCGFTGSIFHIGITLCVLWSMTMGIVLYSKIKQFKLPNFRYFLIGNLSFTVVTLIILASAKKFQGGNGFLECWMRDRWYVVAIFWIPCGIALLLGVLSICGVIFEIYKISKNVSLKDSKVVIRELKPFVLVVTVSASLIYLFVFYFDSESKYDFYKKGVEDYILCLLTSENPLDECYTVGPNFNSYFMFYFLIRFFGILFFGIFGTSEIARNAWTESFFVTKIKSKISITTVSSSTRGGGGDTSGIKSSSSSSNSGVCNNNNSTRKNYGDDFNSKNLSQPDNTIITNNNNNDNNNKMEIELDSIDI</sequence>
<name>FSLD_DICDI</name>
<comment type="subcellular location">
    <subcellularLocation>
        <location evidence="3">Membrane</location>
        <topology evidence="3">Multi-pass membrane protein</topology>
    </subcellularLocation>
</comment>
<comment type="similarity">
    <text evidence="3">Belongs to the G-protein coupled receptor Fz/Smo family.</text>
</comment>
<evidence type="ECO:0000255" key="1"/>
<evidence type="ECO:0000256" key="2">
    <source>
        <dbReference type="SAM" id="MobiDB-lite"/>
    </source>
</evidence>
<evidence type="ECO:0000305" key="3"/>
<organism>
    <name type="scientific">Dictyostelium discoideum</name>
    <name type="common">Social amoeba</name>
    <dbReference type="NCBI Taxonomy" id="44689"/>
    <lineage>
        <taxon>Eukaryota</taxon>
        <taxon>Amoebozoa</taxon>
        <taxon>Evosea</taxon>
        <taxon>Eumycetozoa</taxon>
        <taxon>Dictyostelia</taxon>
        <taxon>Dictyosteliales</taxon>
        <taxon>Dictyosteliaceae</taxon>
        <taxon>Dictyostelium</taxon>
    </lineage>
</organism>
<dbReference type="EMBL" id="AAFI02000005">
    <property type="protein sequence ID" value="EAL72114.1"/>
    <property type="molecule type" value="Genomic_DNA"/>
</dbReference>
<dbReference type="RefSeq" id="XP_646044.1">
    <property type="nucleotide sequence ID" value="XM_640952.1"/>
</dbReference>
<dbReference type="FunCoup" id="Q55DT7">
    <property type="interactions" value="19"/>
</dbReference>
<dbReference type="GlyCosmos" id="Q55DT7">
    <property type="glycosylation" value="5 sites, No reported glycans"/>
</dbReference>
<dbReference type="GlyGen" id="Q55DT7">
    <property type="glycosylation" value="5 sites"/>
</dbReference>
<dbReference type="PaxDb" id="44689-DDB0231834"/>
<dbReference type="EnsemblProtists" id="EAL72114">
    <property type="protein sequence ID" value="EAL72114"/>
    <property type="gene ID" value="DDB_G0269528"/>
</dbReference>
<dbReference type="GeneID" id="8616991"/>
<dbReference type="KEGG" id="ddi:DDB_G0269528"/>
<dbReference type="dictyBase" id="DDB_G0269528">
    <property type="gene designation" value="fslD"/>
</dbReference>
<dbReference type="VEuPathDB" id="AmoebaDB:DDB_G0269528"/>
<dbReference type="eggNOG" id="ENOG502T166">
    <property type="taxonomic scope" value="Eukaryota"/>
</dbReference>
<dbReference type="HOGENOM" id="CLU_030318_0_0_1"/>
<dbReference type="InParanoid" id="Q55DT7"/>
<dbReference type="PhylomeDB" id="Q55DT7"/>
<dbReference type="PRO" id="PR:Q55DT7"/>
<dbReference type="Proteomes" id="UP000002195">
    <property type="component" value="Chromosome 1"/>
</dbReference>
<dbReference type="GO" id="GO:0016020">
    <property type="term" value="C:membrane"/>
    <property type="evidence" value="ECO:0007669"/>
    <property type="project" value="UniProtKB-SubCell"/>
</dbReference>
<dbReference type="Gene3D" id="1.20.1070.10">
    <property type="entry name" value="Rhodopsin 7-helix transmembrane proteins"/>
    <property type="match status" value="1"/>
</dbReference>
<dbReference type="InterPro" id="IPR050949">
    <property type="entry name" value="GPCR_Fz/Smo-like"/>
</dbReference>
<dbReference type="PANTHER" id="PTHR31787:SF1">
    <property type="entry name" value="FRIZZLED AND SMOOTHENED-LIKE PROTEIN B-RELATED"/>
    <property type="match status" value="1"/>
</dbReference>
<dbReference type="PANTHER" id="PTHR31787">
    <property type="entry name" value="G-PROTEIN-COUPLED RECEPTOR GPCR FAMILY PROTEIN"/>
    <property type="match status" value="1"/>
</dbReference>
<proteinExistence type="inferred from homology"/>